<geneLocation type="chloroplast"/>
<accession>Q332X4</accession>
<organism>
    <name type="scientific">Lactuca sativa</name>
    <name type="common">Garden lettuce</name>
    <dbReference type="NCBI Taxonomy" id="4236"/>
    <lineage>
        <taxon>Eukaryota</taxon>
        <taxon>Viridiplantae</taxon>
        <taxon>Streptophyta</taxon>
        <taxon>Embryophyta</taxon>
        <taxon>Tracheophyta</taxon>
        <taxon>Spermatophyta</taxon>
        <taxon>Magnoliopsida</taxon>
        <taxon>eudicotyledons</taxon>
        <taxon>Gunneridae</taxon>
        <taxon>Pentapetalae</taxon>
        <taxon>asterids</taxon>
        <taxon>campanulids</taxon>
        <taxon>Asterales</taxon>
        <taxon>Asteraceae</taxon>
        <taxon>Cichorioideae</taxon>
        <taxon>Cichorieae</taxon>
        <taxon>Lactucinae</taxon>
        <taxon>Lactuca</taxon>
    </lineage>
</organism>
<protein>
    <recommendedName>
        <fullName evidence="1">NAD(P)H-quinone oxidoreductase subunit K, chloroplastic</fullName>
        <ecNumber evidence="1">7.1.1.-</ecNumber>
    </recommendedName>
    <alternativeName>
        <fullName evidence="1">NAD(P)H dehydrogenase subunit K</fullName>
    </alternativeName>
    <alternativeName>
        <fullName evidence="1">NADH-plastoquinone oxidoreductase subunit K</fullName>
    </alternativeName>
</protein>
<proteinExistence type="inferred from homology"/>
<evidence type="ECO:0000255" key="1">
    <source>
        <dbReference type="HAMAP-Rule" id="MF_01356"/>
    </source>
</evidence>
<gene>
    <name evidence="1" type="primary">ndhK</name>
</gene>
<keyword id="KW-0004">4Fe-4S</keyword>
<keyword id="KW-0150">Chloroplast</keyword>
<keyword id="KW-0408">Iron</keyword>
<keyword id="KW-0411">Iron-sulfur</keyword>
<keyword id="KW-0472">Membrane</keyword>
<keyword id="KW-0479">Metal-binding</keyword>
<keyword id="KW-0520">NAD</keyword>
<keyword id="KW-0521">NADP</keyword>
<keyword id="KW-0934">Plastid</keyword>
<keyword id="KW-0618">Plastoquinone</keyword>
<keyword id="KW-0874">Quinone</keyword>
<keyword id="KW-0793">Thylakoid</keyword>
<keyword id="KW-1278">Translocase</keyword>
<keyword id="KW-0813">Transport</keyword>
<reference key="1">
    <citation type="journal article" date="2006" name="Transgenic Res.">
        <title>Efficient and stable transformation of Lactuca sativa L. cv. Cisco (lettuce) plastids.</title>
        <authorList>
            <person name="Kanamoto H."/>
            <person name="Yamashita A."/>
            <person name="Asao H."/>
            <person name="Okumura S."/>
            <person name="Takase H."/>
            <person name="Hattori M."/>
            <person name="Yokota A."/>
            <person name="Tomizawa K."/>
        </authorList>
    </citation>
    <scope>NUCLEOTIDE SEQUENCE [LARGE SCALE GENOMIC DNA]</scope>
    <source>
        <strain>cv. Cisco</strain>
    </source>
</reference>
<reference key="2">
    <citation type="submission" date="2006-01" db="EMBL/GenBank/DDBJ databases">
        <title>A comparison of the first two published chloroplast genomes in Asteraceae: Lactuca and Helianthus.</title>
        <authorList>
            <person name="Timme R.E."/>
            <person name="Kuehl J.V."/>
            <person name="Boore J.L."/>
            <person name="Jansen R.K."/>
        </authorList>
    </citation>
    <scope>NUCLEOTIDE SEQUENCE [LARGE SCALE GENOMIC DNA]</scope>
    <source>
        <strain>cv. Salinas</strain>
    </source>
</reference>
<sequence length="225" mass="25340">MNSIEFPLFDRTTQNSVISTTLNDLSNWSRLSSLWPLLYGTSCCFIEFASLIGSRFDFDRYGLVPRSSPRQADLILTAGTVTMKMAPSLVRLYEQMPEPKYVIAMGACTITGGMFSTDSYSTVRGVDKLIPVDVYLPGCPPKPEAIIDAITKLRKKISREIYPDRTMSQRENRCFTTNHKFQVGHSIHTGNYDQGFLYQPTSTSEIPPETFFKYKSSVSSPELVN</sequence>
<comment type="function">
    <text evidence="1">NDH shuttles electrons from NAD(P)H:plastoquinone, via FMN and iron-sulfur (Fe-S) centers, to quinones in the photosynthetic chain and possibly in a chloroplast respiratory chain. The immediate electron acceptor for the enzyme in this species is believed to be plastoquinone. Couples the redox reaction to proton translocation, and thus conserves the redox energy in a proton gradient.</text>
</comment>
<comment type="catalytic activity">
    <reaction evidence="1">
        <text>a plastoquinone + NADH + (n+1) H(+)(in) = a plastoquinol + NAD(+) + n H(+)(out)</text>
        <dbReference type="Rhea" id="RHEA:42608"/>
        <dbReference type="Rhea" id="RHEA-COMP:9561"/>
        <dbReference type="Rhea" id="RHEA-COMP:9562"/>
        <dbReference type="ChEBI" id="CHEBI:15378"/>
        <dbReference type="ChEBI" id="CHEBI:17757"/>
        <dbReference type="ChEBI" id="CHEBI:57540"/>
        <dbReference type="ChEBI" id="CHEBI:57945"/>
        <dbReference type="ChEBI" id="CHEBI:62192"/>
    </reaction>
</comment>
<comment type="catalytic activity">
    <reaction evidence="1">
        <text>a plastoquinone + NADPH + (n+1) H(+)(in) = a plastoquinol + NADP(+) + n H(+)(out)</text>
        <dbReference type="Rhea" id="RHEA:42612"/>
        <dbReference type="Rhea" id="RHEA-COMP:9561"/>
        <dbReference type="Rhea" id="RHEA-COMP:9562"/>
        <dbReference type="ChEBI" id="CHEBI:15378"/>
        <dbReference type="ChEBI" id="CHEBI:17757"/>
        <dbReference type="ChEBI" id="CHEBI:57783"/>
        <dbReference type="ChEBI" id="CHEBI:58349"/>
        <dbReference type="ChEBI" id="CHEBI:62192"/>
    </reaction>
</comment>
<comment type="cofactor">
    <cofactor evidence="1">
        <name>[4Fe-4S] cluster</name>
        <dbReference type="ChEBI" id="CHEBI:49883"/>
    </cofactor>
    <text evidence="1">Binds 1 [4Fe-4S] cluster.</text>
</comment>
<comment type="subunit">
    <text evidence="1">NDH is composed of at least 16 different subunits, 5 of which are encoded in the nucleus.</text>
</comment>
<comment type="subcellular location">
    <subcellularLocation>
        <location evidence="1">Plastid</location>
        <location evidence="1">Chloroplast thylakoid membrane</location>
        <topology evidence="1">Peripheral membrane protein</topology>
        <orientation evidence="1">Stromal side</orientation>
    </subcellularLocation>
</comment>
<comment type="similarity">
    <text evidence="1">Belongs to the complex I 20 kDa subunit family.</text>
</comment>
<dbReference type="EC" id="7.1.1.-" evidence="1"/>
<dbReference type="EMBL" id="DQ383816">
    <property type="protein sequence ID" value="ABD47237.1"/>
    <property type="molecule type" value="Genomic_DNA"/>
</dbReference>
<dbReference type="EMBL" id="AP007232">
    <property type="protein sequence ID" value="BAE47598.1"/>
    <property type="molecule type" value="Genomic_DNA"/>
</dbReference>
<dbReference type="RefSeq" id="YP_398333.1">
    <property type="nucleotide sequence ID" value="NC_007578.1"/>
</dbReference>
<dbReference type="SMR" id="Q332X4"/>
<dbReference type="GeneID" id="3772860"/>
<dbReference type="KEGG" id="lsv:3772860"/>
<dbReference type="OrthoDB" id="1889813at2759"/>
<dbReference type="GO" id="GO:0009535">
    <property type="term" value="C:chloroplast thylakoid membrane"/>
    <property type="evidence" value="ECO:0007669"/>
    <property type="project" value="UniProtKB-SubCell"/>
</dbReference>
<dbReference type="GO" id="GO:0051539">
    <property type="term" value="F:4 iron, 4 sulfur cluster binding"/>
    <property type="evidence" value="ECO:0007669"/>
    <property type="project" value="UniProtKB-KW"/>
</dbReference>
<dbReference type="GO" id="GO:0005506">
    <property type="term" value="F:iron ion binding"/>
    <property type="evidence" value="ECO:0007669"/>
    <property type="project" value="UniProtKB-UniRule"/>
</dbReference>
<dbReference type="GO" id="GO:0008137">
    <property type="term" value="F:NADH dehydrogenase (ubiquinone) activity"/>
    <property type="evidence" value="ECO:0007669"/>
    <property type="project" value="InterPro"/>
</dbReference>
<dbReference type="GO" id="GO:0048038">
    <property type="term" value="F:quinone binding"/>
    <property type="evidence" value="ECO:0007669"/>
    <property type="project" value="UniProtKB-KW"/>
</dbReference>
<dbReference type="GO" id="GO:0019684">
    <property type="term" value="P:photosynthesis, light reaction"/>
    <property type="evidence" value="ECO:0007669"/>
    <property type="project" value="UniProtKB-UniRule"/>
</dbReference>
<dbReference type="FunFam" id="3.40.50.12280:FF:000003">
    <property type="entry name" value="NAD(P)H-quinone oxidoreductase subunit K, chloroplastic"/>
    <property type="match status" value="1"/>
</dbReference>
<dbReference type="Gene3D" id="3.40.50.12280">
    <property type="match status" value="1"/>
</dbReference>
<dbReference type="HAMAP" id="MF_01356">
    <property type="entry name" value="NDH1_NuoB"/>
    <property type="match status" value="1"/>
</dbReference>
<dbReference type="InterPro" id="IPR006137">
    <property type="entry name" value="NADH_UbQ_OxRdtase-like_20kDa"/>
</dbReference>
<dbReference type="InterPro" id="IPR006138">
    <property type="entry name" value="NADH_UQ_OxRdtase_20Kd_su"/>
</dbReference>
<dbReference type="NCBIfam" id="TIGR01957">
    <property type="entry name" value="nuoB_fam"/>
    <property type="match status" value="1"/>
</dbReference>
<dbReference type="NCBIfam" id="NF005012">
    <property type="entry name" value="PRK06411.1"/>
    <property type="match status" value="1"/>
</dbReference>
<dbReference type="PANTHER" id="PTHR11995">
    <property type="entry name" value="NADH DEHYDROGENASE"/>
    <property type="match status" value="1"/>
</dbReference>
<dbReference type="PANTHER" id="PTHR11995:SF14">
    <property type="entry name" value="NADH DEHYDROGENASE [UBIQUINONE] IRON-SULFUR PROTEIN 7, MITOCHONDRIAL"/>
    <property type="match status" value="1"/>
</dbReference>
<dbReference type="Pfam" id="PF01058">
    <property type="entry name" value="Oxidored_q6"/>
    <property type="match status" value="1"/>
</dbReference>
<dbReference type="SUPFAM" id="SSF56770">
    <property type="entry name" value="HydA/Nqo6-like"/>
    <property type="match status" value="1"/>
</dbReference>
<dbReference type="PROSITE" id="PS01150">
    <property type="entry name" value="COMPLEX1_20K"/>
    <property type="match status" value="1"/>
</dbReference>
<name>NDHK_LACSA</name>
<feature type="chain" id="PRO_0000358553" description="NAD(P)H-quinone oxidoreductase subunit K, chloroplastic">
    <location>
        <begin position="1"/>
        <end position="225"/>
    </location>
</feature>
<feature type="binding site" evidence="1">
    <location>
        <position position="43"/>
    </location>
    <ligand>
        <name>[4Fe-4S] cluster</name>
        <dbReference type="ChEBI" id="CHEBI:49883"/>
    </ligand>
</feature>
<feature type="binding site" evidence="1">
    <location>
        <position position="44"/>
    </location>
    <ligand>
        <name>[4Fe-4S] cluster</name>
        <dbReference type="ChEBI" id="CHEBI:49883"/>
    </ligand>
</feature>
<feature type="binding site" evidence="1">
    <location>
        <position position="108"/>
    </location>
    <ligand>
        <name>[4Fe-4S] cluster</name>
        <dbReference type="ChEBI" id="CHEBI:49883"/>
    </ligand>
</feature>
<feature type="binding site" evidence="1">
    <location>
        <position position="139"/>
    </location>
    <ligand>
        <name>[4Fe-4S] cluster</name>
        <dbReference type="ChEBI" id="CHEBI:49883"/>
    </ligand>
</feature>